<dbReference type="EC" id="6.1.1.7"/>
<dbReference type="EMBL" id="DQ489736">
    <property type="protein sequence ID" value="ACA82300.1"/>
    <property type="molecule type" value="Genomic_DNA"/>
</dbReference>
<dbReference type="RefSeq" id="WP_004908976.1">
    <property type="nucleotide sequence ID" value="NC_010471.1"/>
</dbReference>
<dbReference type="SMR" id="B1MXP8"/>
<dbReference type="STRING" id="349519.LCK_00467"/>
<dbReference type="KEGG" id="lci:LCK_00467"/>
<dbReference type="eggNOG" id="COG0013">
    <property type="taxonomic scope" value="Bacteria"/>
</dbReference>
<dbReference type="HOGENOM" id="CLU_004485_1_1_9"/>
<dbReference type="OrthoDB" id="9803884at2"/>
<dbReference type="Proteomes" id="UP000002166">
    <property type="component" value="Chromosome"/>
</dbReference>
<dbReference type="GO" id="GO:0005829">
    <property type="term" value="C:cytosol"/>
    <property type="evidence" value="ECO:0007669"/>
    <property type="project" value="TreeGrafter"/>
</dbReference>
<dbReference type="GO" id="GO:0004813">
    <property type="term" value="F:alanine-tRNA ligase activity"/>
    <property type="evidence" value="ECO:0007669"/>
    <property type="project" value="UniProtKB-UniRule"/>
</dbReference>
<dbReference type="GO" id="GO:0002161">
    <property type="term" value="F:aminoacyl-tRNA deacylase activity"/>
    <property type="evidence" value="ECO:0007669"/>
    <property type="project" value="TreeGrafter"/>
</dbReference>
<dbReference type="GO" id="GO:0005524">
    <property type="term" value="F:ATP binding"/>
    <property type="evidence" value="ECO:0007669"/>
    <property type="project" value="UniProtKB-UniRule"/>
</dbReference>
<dbReference type="GO" id="GO:0140096">
    <property type="term" value="F:catalytic activity, acting on a protein"/>
    <property type="evidence" value="ECO:0007669"/>
    <property type="project" value="UniProtKB-ARBA"/>
</dbReference>
<dbReference type="GO" id="GO:0016740">
    <property type="term" value="F:transferase activity"/>
    <property type="evidence" value="ECO:0007669"/>
    <property type="project" value="UniProtKB-ARBA"/>
</dbReference>
<dbReference type="GO" id="GO:0000049">
    <property type="term" value="F:tRNA binding"/>
    <property type="evidence" value="ECO:0007669"/>
    <property type="project" value="UniProtKB-KW"/>
</dbReference>
<dbReference type="GO" id="GO:0006419">
    <property type="term" value="P:alanyl-tRNA aminoacylation"/>
    <property type="evidence" value="ECO:0007669"/>
    <property type="project" value="UniProtKB-UniRule"/>
</dbReference>
<dbReference type="CDD" id="cd00673">
    <property type="entry name" value="AlaRS_core"/>
    <property type="match status" value="1"/>
</dbReference>
<dbReference type="FunFam" id="3.10.310.40:FF:000001">
    <property type="entry name" value="Alanine--tRNA ligase"/>
    <property type="match status" value="1"/>
</dbReference>
<dbReference type="FunFam" id="3.30.930.10:FF:000046">
    <property type="entry name" value="Alanine--tRNA ligase"/>
    <property type="match status" value="1"/>
</dbReference>
<dbReference type="FunFam" id="3.30.980.10:FF:000004">
    <property type="entry name" value="Alanine--tRNA ligase, cytoplasmic"/>
    <property type="match status" value="1"/>
</dbReference>
<dbReference type="Gene3D" id="2.40.30.130">
    <property type="match status" value="1"/>
</dbReference>
<dbReference type="Gene3D" id="3.10.310.40">
    <property type="match status" value="1"/>
</dbReference>
<dbReference type="Gene3D" id="3.30.54.20">
    <property type="match status" value="1"/>
</dbReference>
<dbReference type="Gene3D" id="6.10.250.550">
    <property type="match status" value="1"/>
</dbReference>
<dbReference type="Gene3D" id="3.30.930.10">
    <property type="entry name" value="Bira Bifunctional Protein, Domain 2"/>
    <property type="match status" value="1"/>
</dbReference>
<dbReference type="Gene3D" id="3.30.980.10">
    <property type="entry name" value="Threonyl-trna Synthetase, Chain A, domain 2"/>
    <property type="match status" value="1"/>
</dbReference>
<dbReference type="HAMAP" id="MF_00036_B">
    <property type="entry name" value="Ala_tRNA_synth_B"/>
    <property type="match status" value="1"/>
</dbReference>
<dbReference type="InterPro" id="IPR045864">
    <property type="entry name" value="aa-tRNA-synth_II/BPL/LPL"/>
</dbReference>
<dbReference type="InterPro" id="IPR002318">
    <property type="entry name" value="Ala-tRNA-lgiase_IIc"/>
</dbReference>
<dbReference type="InterPro" id="IPR018162">
    <property type="entry name" value="Ala-tRNA-ligase_IIc_anticod-bd"/>
</dbReference>
<dbReference type="InterPro" id="IPR018165">
    <property type="entry name" value="Ala-tRNA-synth_IIc_core"/>
</dbReference>
<dbReference type="InterPro" id="IPR018164">
    <property type="entry name" value="Ala-tRNA-synth_IIc_N"/>
</dbReference>
<dbReference type="InterPro" id="IPR050058">
    <property type="entry name" value="Ala-tRNA_ligase"/>
</dbReference>
<dbReference type="InterPro" id="IPR023033">
    <property type="entry name" value="Ala_tRNA_ligase_euk/bac"/>
</dbReference>
<dbReference type="InterPro" id="IPR003156">
    <property type="entry name" value="DHHA1_dom"/>
</dbReference>
<dbReference type="InterPro" id="IPR018163">
    <property type="entry name" value="Thr/Ala-tRNA-synth_IIc_edit"/>
</dbReference>
<dbReference type="InterPro" id="IPR009000">
    <property type="entry name" value="Transl_B-barrel_sf"/>
</dbReference>
<dbReference type="InterPro" id="IPR012947">
    <property type="entry name" value="tRNA_SAD"/>
</dbReference>
<dbReference type="NCBIfam" id="TIGR00344">
    <property type="entry name" value="alaS"/>
    <property type="match status" value="1"/>
</dbReference>
<dbReference type="PANTHER" id="PTHR11777:SF9">
    <property type="entry name" value="ALANINE--TRNA LIGASE, CYTOPLASMIC"/>
    <property type="match status" value="1"/>
</dbReference>
<dbReference type="PANTHER" id="PTHR11777">
    <property type="entry name" value="ALANYL-TRNA SYNTHETASE"/>
    <property type="match status" value="1"/>
</dbReference>
<dbReference type="Pfam" id="PF02272">
    <property type="entry name" value="DHHA1"/>
    <property type="match status" value="1"/>
</dbReference>
<dbReference type="Pfam" id="PF01411">
    <property type="entry name" value="tRNA-synt_2c"/>
    <property type="match status" value="1"/>
</dbReference>
<dbReference type="Pfam" id="PF07973">
    <property type="entry name" value="tRNA_SAD"/>
    <property type="match status" value="1"/>
</dbReference>
<dbReference type="PRINTS" id="PR00980">
    <property type="entry name" value="TRNASYNTHALA"/>
</dbReference>
<dbReference type="SMART" id="SM00863">
    <property type="entry name" value="tRNA_SAD"/>
    <property type="match status" value="1"/>
</dbReference>
<dbReference type="SUPFAM" id="SSF55681">
    <property type="entry name" value="Class II aaRS and biotin synthetases"/>
    <property type="match status" value="1"/>
</dbReference>
<dbReference type="SUPFAM" id="SSF101353">
    <property type="entry name" value="Putative anticodon-binding domain of alanyl-tRNA synthetase (AlaRS)"/>
    <property type="match status" value="1"/>
</dbReference>
<dbReference type="SUPFAM" id="SSF55186">
    <property type="entry name" value="ThrRS/AlaRS common domain"/>
    <property type="match status" value="1"/>
</dbReference>
<dbReference type="SUPFAM" id="SSF50447">
    <property type="entry name" value="Translation proteins"/>
    <property type="match status" value="1"/>
</dbReference>
<dbReference type="PROSITE" id="PS50860">
    <property type="entry name" value="AA_TRNA_LIGASE_II_ALA"/>
    <property type="match status" value="1"/>
</dbReference>
<comment type="function">
    <text evidence="1">Catalyzes the attachment of alanine to tRNA(Ala) in a two-step reaction: alanine is first activated by ATP to form Ala-AMP and then transferred to the acceptor end of tRNA(Ala). Also edits incorrectly charged Ser-tRNA(Ala) and Gly-tRNA(Ala) via its editing domain (By similarity).</text>
</comment>
<comment type="catalytic activity">
    <reaction>
        <text>tRNA(Ala) + L-alanine + ATP = L-alanyl-tRNA(Ala) + AMP + diphosphate</text>
        <dbReference type="Rhea" id="RHEA:12540"/>
        <dbReference type="Rhea" id="RHEA-COMP:9657"/>
        <dbReference type="Rhea" id="RHEA-COMP:9923"/>
        <dbReference type="ChEBI" id="CHEBI:30616"/>
        <dbReference type="ChEBI" id="CHEBI:33019"/>
        <dbReference type="ChEBI" id="CHEBI:57972"/>
        <dbReference type="ChEBI" id="CHEBI:78442"/>
        <dbReference type="ChEBI" id="CHEBI:78497"/>
        <dbReference type="ChEBI" id="CHEBI:456215"/>
        <dbReference type="EC" id="6.1.1.7"/>
    </reaction>
</comment>
<comment type="subcellular location">
    <subcellularLocation>
        <location evidence="1">Cytoplasm</location>
    </subcellularLocation>
</comment>
<comment type="domain">
    <text evidence="1">Consists of three domains; the N-terminal catalytic domain, the editing domain and the C-terminal C-Ala domain. The editing domain removes incorrectly charged amino acids, while the C-Ala domain, along with tRNA(Ala), serves as a bridge to cooperatively bring together the editing and aminoacylation centers thus stimulating deacylation of misacylated tRNAs (By similarity).</text>
</comment>
<comment type="similarity">
    <text evidence="2">Belongs to the class-II aminoacyl-tRNA synthetase family.</text>
</comment>
<evidence type="ECO:0000250" key="1"/>
<evidence type="ECO:0000305" key="2"/>
<accession>B1MXP8</accession>
<feature type="chain" id="PRO_0000347660" description="Alanine--tRNA ligase">
    <location>
        <begin position="1"/>
        <end position="894"/>
    </location>
</feature>
<keyword id="KW-0030">Aminoacyl-tRNA synthetase</keyword>
<keyword id="KW-0067">ATP-binding</keyword>
<keyword id="KW-0963">Cytoplasm</keyword>
<keyword id="KW-0436">Ligase</keyword>
<keyword id="KW-0547">Nucleotide-binding</keyword>
<keyword id="KW-0648">Protein biosynthesis</keyword>
<keyword id="KW-1185">Reference proteome</keyword>
<keyword id="KW-0694">RNA-binding</keyword>
<keyword id="KW-0820">tRNA-binding</keyword>
<gene>
    <name type="primary">alaS</name>
    <name type="ordered locus">LCK_00467</name>
</gene>
<name>SYA_LEUCK</name>
<organism>
    <name type="scientific">Leuconostoc citreum (strain KM20)</name>
    <dbReference type="NCBI Taxonomy" id="349519"/>
    <lineage>
        <taxon>Bacteria</taxon>
        <taxon>Bacillati</taxon>
        <taxon>Bacillota</taxon>
        <taxon>Bacilli</taxon>
        <taxon>Lactobacillales</taxon>
        <taxon>Lactobacillaceae</taxon>
        <taxon>Leuconostoc</taxon>
    </lineage>
</organism>
<proteinExistence type="inferred from homology"/>
<sequence>MKELTSSEVRQMFLDFFASKGHEIVPSKNLIPQDDPTLLWINSGVATLKKYFDGSVIPKNPRITNAQKAIRTNDIENVGKTARHHTLFEMMGNFSVGDYFKAEVIPWAWELLTSPEWYGLDKDLLYVTVYPKDQEAKKIWLEKTDLPEGHIYEVEDNFWDIGEGPSGPDSEIFFDRGPAFQNLPDNDPEMYPGGENERYLEIWNIVFSQFNHLPGLTDNAQYPELPHKNIDTGMGLERLVSVFQNGRTNFDTDLFLPIIRATEKMSPDYTYDATKDSESNTSFKVIADHIRAITFAIGDGALPANEGRGYVIRRLLRRAVLHGQKLGIQGEFLTKLVPIVAEIMQSYYPEIADNTEKIQKTIAAEEKRFNATLTGGLSLLNDVIAKAKASGQQVISGADAFKLSDTYGFPLELTQEQAADEGLTVDVVGFNDALQAQRTRARAARSNDKSMGVQNAVLTDLKVPSDYVGWSETEVSNAAIVAIIGHDNQGVDALLANAEPGDSVQLVFDKTPFYAEMGGQVADQGEVLNKQGEVVARVTDTQSAPNGQHVHTVEVVTSFKLGDQVALKVNLARHVAISKNHTATHLLDQTLRNVIGGDVHQAGSLVEPEYLRFDFTHEGPVSEQNLEKIETMVNQVIANNLPITWVETDIESAKKMGAVAVFGEKYGDVVRVVSIGDFNKEFDGGTHAQTTAELGLFKIVSESGIGAGVRRIEAVTGLAALSQFKAEEQALKVIADSLKAQKLTDAPAKVEDLQVEIKTLQRHLTSVEAQLANAAAQDVFKDVKTQNGYQYITAQLQVSGMDGLRQVVDTWRENYPSDVLVLATHVDDKVSLIVAASPEANKKGFKAGDLIKAIAPKIGGGGGGRPDMAQAGGKNPAGINDAFSAVSTFLDELA</sequence>
<reference key="1">
    <citation type="journal article" date="2008" name="J. Bacteriol.">
        <title>Complete genome sequence of Leuconostoc citreum KM20.</title>
        <authorList>
            <person name="Kim J.F."/>
            <person name="Jeong H."/>
            <person name="Lee J.-S."/>
            <person name="Choi S.-H."/>
            <person name="Ha M."/>
            <person name="Hur C.-G."/>
            <person name="Kim J.-S."/>
            <person name="Lee S."/>
            <person name="Park H.-S."/>
            <person name="Park Y.-H."/>
            <person name="Oh T.K."/>
        </authorList>
    </citation>
    <scope>NUCLEOTIDE SEQUENCE [LARGE SCALE GENOMIC DNA]</scope>
    <source>
        <strain>KM20</strain>
    </source>
</reference>
<protein>
    <recommendedName>
        <fullName>Alanine--tRNA ligase</fullName>
        <ecNumber>6.1.1.7</ecNumber>
    </recommendedName>
    <alternativeName>
        <fullName>Alanyl-tRNA synthetase</fullName>
        <shortName>AlaRS</shortName>
    </alternativeName>
</protein>